<sequence length="15" mass="1652">EKFPAVNQKPQAAXL</sequence>
<organism>
    <name type="scientific">Bothrops jararaca</name>
    <name type="common">Jararaca</name>
    <name type="synonym">Bothrops jajaraca</name>
    <dbReference type="NCBI Taxonomy" id="8724"/>
    <lineage>
        <taxon>Eukaryota</taxon>
        <taxon>Metazoa</taxon>
        <taxon>Chordata</taxon>
        <taxon>Craniata</taxon>
        <taxon>Vertebrata</taxon>
        <taxon>Euteleostomi</taxon>
        <taxon>Lepidosauria</taxon>
        <taxon>Squamata</taxon>
        <taxon>Bifurcata</taxon>
        <taxon>Unidentata</taxon>
        <taxon>Episquamata</taxon>
        <taxon>Toxicofera</taxon>
        <taxon>Serpentes</taxon>
        <taxon>Colubroidea</taxon>
        <taxon>Viperidae</taxon>
        <taxon>Crotalinae</taxon>
        <taxon>Bothrops</taxon>
    </lineage>
</organism>
<protein>
    <recommendedName>
        <fullName>Thrombin inhibitor subunit 1</fullName>
    </recommendedName>
    <alternativeName>
        <fullName>Thrombin inhibitor subunit I</fullName>
    </alternativeName>
</protein>
<dbReference type="GO" id="GO:0005576">
    <property type="term" value="C:extracellular region"/>
    <property type="evidence" value="ECO:0007669"/>
    <property type="project" value="UniProtKB-SubCell"/>
</dbReference>
<dbReference type="GO" id="GO:0090729">
    <property type="term" value="F:toxin activity"/>
    <property type="evidence" value="ECO:0007669"/>
    <property type="project" value="UniProtKB-KW"/>
</dbReference>
<feature type="chain" id="PRO_0000072512" description="Thrombin inhibitor subunit 1">
    <location>
        <begin position="1" status="less than"/>
        <end position="15"/>
    </location>
</feature>
<feature type="non-terminal residue" evidence="2">
    <location>
        <position position="1"/>
    </location>
</feature>
<name>THBI_BOTJA</name>
<evidence type="ECO:0000269" key="1">
    <source>
    </source>
</evidence>
<evidence type="ECO:0000303" key="2">
    <source>
    </source>
</evidence>
<evidence type="ECO:0000305" key="3"/>
<reference evidence="3" key="1">
    <citation type="journal article" date="2003" name="Biochem. Biophys. Res. Commun.">
        <title>A new blood coagulation inhibitor from the snake Bothrops jararaca plasma: isolation and characterization.</title>
        <authorList>
            <person name="Tanaka-Azevedo A.M."/>
            <person name="Tanaka A.S."/>
            <person name="Sano-Martins I.S."/>
        </authorList>
    </citation>
    <scope>PROTEIN SEQUENCE</scope>
    <scope>FUNCTION</scope>
    <scope>SUBCELLULAR LOCATION</scope>
    <scope>TISSUE SPECIFICITY</scope>
    <scope>SUBUNIT</scope>
    <scope>GLYCOSYLATION</scope>
    <source>
        <tissue evidence="1">Plasma</tissue>
    </source>
</reference>
<keyword id="KW-1203">Blood coagulation cascade inhibiting toxin</keyword>
<keyword id="KW-0903">Direct protein sequencing</keyword>
<keyword id="KW-0325">Glycoprotein</keyword>
<keyword id="KW-1199">Hemostasis impairing toxin</keyword>
<keyword id="KW-0964">Secreted</keyword>
<keyword id="KW-0800">Toxin</keyword>
<proteinExistence type="evidence at protein level"/>
<comment type="function">
    <text evidence="1 2">Binds to thrombin and inhibits blood coagulant activity. Does not inhibit the serine protease activity of thrombin or platelet aggregation activity. May bind to the heparin recognition exosite.</text>
</comment>
<comment type="subunit">
    <text evidence="1">Heteromer of subunit I and subunit II.</text>
</comment>
<comment type="subcellular location">
    <subcellularLocation>
        <location evidence="1">Secreted</location>
    </subcellularLocation>
</comment>
<comment type="tissue specificity">
    <text evidence="1">Plasma.</text>
</comment>
<comment type="PTM">
    <text evidence="1">Glycosylated.</text>
</comment>
<accession>P84026</accession>